<comment type="subcellular location">
    <subcellularLocation>
        <location evidence="2">Membrane</location>
        <topology evidence="2">Single-pass membrane protein</topology>
    </subcellularLocation>
</comment>
<protein>
    <recommendedName>
        <fullName>Uncharacterized protein HI_0213.1</fullName>
    </recommendedName>
</protein>
<gene>
    <name type="ordered locus">HI_0213.1</name>
</gene>
<organism>
    <name type="scientific">Haemophilus influenzae (strain ATCC 51907 / DSM 11121 / KW20 / Rd)</name>
    <dbReference type="NCBI Taxonomy" id="71421"/>
    <lineage>
        <taxon>Bacteria</taxon>
        <taxon>Pseudomonadati</taxon>
        <taxon>Pseudomonadota</taxon>
        <taxon>Gammaproteobacteria</taxon>
        <taxon>Pasteurellales</taxon>
        <taxon>Pasteurellaceae</taxon>
        <taxon>Haemophilus</taxon>
    </lineage>
</organism>
<proteinExistence type="predicted"/>
<evidence type="ECO:0000255" key="1"/>
<evidence type="ECO:0000305" key="2"/>
<dbReference type="EMBL" id="L42023">
    <property type="protein sequence ID" value="AAC21886.1"/>
    <property type="molecule type" value="Genomic_DNA"/>
</dbReference>
<dbReference type="PIR" id="A59452">
    <property type="entry name" value="D64055"/>
</dbReference>
<dbReference type="SMR" id="O86221"/>
<dbReference type="STRING" id="71421.HI_0213.1"/>
<dbReference type="EnsemblBacteria" id="AAC21886">
    <property type="protein sequence ID" value="AAC21886"/>
    <property type="gene ID" value="HI_0213.1"/>
</dbReference>
<dbReference type="KEGG" id="hin:HI_0213.1"/>
<dbReference type="HOGENOM" id="CLU_2879597_0_0_6"/>
<dbReference type="Proteomes" id="UP000000579">
    <property type="component" value="Chromosome"/>
</dbReference>
<dbReference type="GO" id="GO:0016020">
    <property type="term" value="C:membrane"/>
    <property type="evidence" value="ECO:0007669"/>
    <property type="project" value="UniProtKB-SubCell"/>
</dbReference>
<accession>O86221</accession>
<sequence>MKIIYIILGFLSLAIGIIGIFPSSFAYHAFFITYFIFLHKRFKTLRTMVFRHKYLSKTSQVLS</sequence>
<reference key="1">
    <citation type="journal article" date="1995" name="Science">
        <title>Whole-genome random sequencing and assembly of Haemophilus influenzae Rd.</title>
        <authorList>
            <person name="Fleischmann R.D."/>
            <person name="Adams M.D."/>
            <person name="White O."/>
            <person name="Clayton R.A."/>
            <person name="Kirkness E.F."/>
            <person name="Kerlavage A.R."/>
            <person name="Bult C.J."/>
            <person name="Tomb J.-F."/>
            <person name="Dougherty B.A."/>
            <person name="Merrick J.M."/>
            <person name="McKenney K."/>
            <person name="Sutton G.G."/>
            <person name="FitzHugh W."/>
            <person name="Fields C.A."/>
            <person name="Gocayne J.D."/>
            <person name="Scott J.D."/>
            <person name="Shirley R."/>
            <person name="Liu L.-I."/>
            <person name="Glodek A."/>
            <person name="Kelley J.M."/>
            <person name="Weidman J.F."/>
            <person name="Phillips C.A."/>
            <person name="Spriggs T."/>
            <person name="Hedblom E."/>
            <person name="Cotton M.D."/>
            <person name="Utterback T.R."/>
            <person name="Hanna M.C."/>
            <person name="Nguyen D.T."/>
            <person name="Saudek D.M."/>
            <person name="Brandon R.C."/>
            <person name="Fine L.D."/>
            <person name="Fritchman J.L."/>
            <person name="Fuhrmann J.L."/>
            <person name="Geoghagen N.S.M."/>
            <person name="Gnehm C.L."/>
            <person name="McDonald L.A."/>
            <person name="Small K.V."/>
            <person name="Fraser C.M."/>
            <person name="Smith H.O."/>
            <person name="Venter J.C."/>
        </authorList>
    </citation>
    <scope>NUCLEOTIDE SEQUENCE [LARGE SCALE GENOMIC DNA]</scope>
    <source>
        <strain>ATCC 51907 / DSM 11121 / KW20 / Rd</strain>
    </source>
</reference>
<reference key="2">
    <citation type="submission" date="1998-05" db="EMBL/GenBank/DDBJ databases">
        <authorList>
            <person name="White O."/>
            <person name="Clayton R.A."/>
            <person name="Kerlavage A.R."/>
            <person name="Fleischmann R.D."/>
            <person name="Peterson J."/>
            <person name="Hickey E."/>
            <person name="Dodson R."/>
            <person name="Gwinn M."/>
        </authorList>
    </citation>
    <scope>IDENTIFICATION</scope>
</reference>
<feature type="chain" id="PRO_0000077897" description="Uncharacterized protein HI_0213.1">
    <location>
        <begin position="1"/>
        <end position="63"/>
    </location>
</feature>
<feature type="transmembrane region" description="Helical" evidence="1">
    <location>
        <begin position="3"/>
        <end position="23"/>
    </location>
</feature>
<name>Y213A_HAEIN</name>
<keyword id="KW-0472">Membrane</keyword>
<keyword id="KW-1185">Reference proteome</keyword>
<keyword id="KW-0812">Transmembrane</keyword>
<keyword id="KW-1133">Transmembrane helix</keyword>